<organism>
    <name type="scientific">Homo sapiens</name>
    <name type="common">Human</name>
    <dbReference type="NCBI Taxonomy" id="9606"/>
    <lineage>
        <taxon>Eukaryota</taxon>
        <taxon>Metazoa</taxon>
        <taxon>Chordata</taxon>
        <taxon>Craniata</taxon>
        <taxon>Vertebrata</taxon>
        <taxon>Euteleostomi</taxon>
        <taxon>Mammalia</taxon>
        <taxon>Eutheria</taxon>
        <taxon>Euarchontoglires</taxon>
        <taxon>Primates</taxon>
        <taxon>Haplorrhini</taxon>
        <taxon>Catarrhini</taxon>
        <taxon>Hominidae</taxon>
        <taxon>Homo</taxon>
    </lineage>
</organism>
<sequence>MDHAEENEILAATQRYYVERPIFSHPVLQERLHTKDKVPDSIADKLKQAFTCTPKKIRNIIYMFLPITKWLPAYKFKEYVLGDLVSGISTGVLQLPQGLAFAMLAAVPPIFGLYSSFYPVIMYCFLGTSRHISIGPFAVISLMIGGVAVRLVPDDIVIPGGVNATNGTEARDALRVKVAMSVTLLSGIIQFCLGVCRFGFVAIYLTEPLVRGFTTAAAVHVFTSMLKYLFGVKTKRYSGIFSVVYSTVAVLQNVKNLNVCSLGVGLMVFGLLLGGKEFNERFKEKLPAPIPLEFFAVVMGTGISAGFNLKESYNVDVVGTLPLGLLPPANPDTSLFHLVYVDAIAIAIVGFSVTISMAKTLANKHGYQVDGNQELIALGLCNSIGSLFQTFSISCSLSRSLVQEGTGGKTQLAGCLASLMILLVILATGFLFESLPQAVLSAIVIVNLKGMFMQFSDLPFFWRTSKIELTIWLTTFVSSLFLGLDYGLITAVIIALLTVIYRTQSPSYKVLGKLPETDVYIDIDAYEEVKEIPGIKIFQINAPIYYANSDLYSNALKRKTGVNPAVIMGARRKAMRKYAKEVGNANMANATVVKADAEVDGEDATKPEEEDGEVKYPPIVIKSTFPEEMQRFMPPGDNVHTVILDFTQVNFIDSVGVKTLAGIVKEYGDVGIYVYLAGCSAQVVNDLTRNRFFENPALWELLFHSIHDAVLGSQLREALAEQEASAPPSQEDLEPNATPATPEA</sequence>
<dbReference type="EMBL" id="AF523354">
    <property type="protein sequence ID" value="AAP31417.1"/>
    <property type="molecule type" value="mRNA"/>
</dbReference>
<dbReference type="EMBL" id="AY256823">
    <property type="protein sequence ID" value="AAP31532.1"/>
    <property type="molecule type" value="mRNA"/>
</dbReference>
<dbReference type="EMBL" id="AY256824">
    <property type="protein sequence ID" value="AAP31533.1"/>
    <property type="molecule type" value="mRNA"/>
</dbReference>
<dbReference type="EMBL" id="AY256825">
    <property type="protein sequence ID" value="AAP31534.1"/>
    <property type="molecule type" value="mRNA"/>
</dbReference>
<dbReference type="EMBL" id="AY289134">
    <property type="protein sequence ID" value="AAP43686.1"/>
    <property type="molecule type" value="mRNA"/>
</dbReference>
<dbReference type="EMBL" id="AC004668">
    <property type="status" value="NOT_ANNOTATED_CDS"/>
    <property type="molecule type" value="Genomic_DNA"/>
</dbReference>
<dbReference type="EMBL" id="AC005064">
    <property type="status" value="NOT_ANNOTATED_CDS"/>
    <property type="molecule type" value="Genomic_DNA"/>
</dbReference>
<dbReference type="EMBL" id="AC093701">
    <property type="status" value="NOT_ANNOTATED_CDS"/>
    <property type="molecule type" value="Genomic_DNA"/>
</dbReference>
<dbReference type="EMBL" id="BC100833">
    <property type="protein sequence ID" value="AAI00834.1"/>
    <property type="molecule type" value="mRNA"/>
</dbReference>
<dbReference type="CCDS" id="CCDS43629.1">
    <molecule id="P58743-3"/>
</dbReference>
<dbReference type="CCDS" id="CCDS43630.1">
    <molecule id="P58743-2"/>
</dbReference>
<dbReference type="CCDS" id="CCDS55150.1">
    <molecule id="P58743-5"/>
</dbReference>
<dbReference type="CCDS" id="CCDS5732.1">
    <molecule id="P58743-4"/>
</dbReference>
<dbReference type="CCDS" id="CCDS5733.1">
    <molecule id="P58743-1"/>
</dbReference>
<dbReference type="RefSeq" id="NP_001161434.1">
    <molecule id="P58743-5"/>
    <property type="nucleotide sequence ID" value="NM_001167962.2"/>
</dbReference>
<dbReference type="RefSeq" id="NP_001308716.1">
    <property type="nucleotide sequence ID" value="NM_001321787.1"/>
</dbReference>
<dbReference type="RefSeq" id="NP_945350.1">
    <molecule id="P58743-1"/>
    <property type="nucleotide sequence ID" value="NM_198999.3"/>
</dbReference>
<dbReference type="RefSeq" id="NP_996766.1">
    <molecule id="P58743-2"/>
    <property type="nucleotide sequence ID" value="NM_206883.3"/>
</dbReference>
<dbReference type="RefSeq" id="NP_996767.1">
    <molecule id="P58743-3"/>
    <property type="nucleotide sequence ID" value="NM_206884.3"/>
</dbReference>
<dbReference type="RefSeq" id="NP_996768.1">
    <molecule id="P58743-4"/>
    <property type="nucleotide sequence ID" value="NM_206885.3"/>
</dbReference>
<dbReference type="RefSeq" id="XP_011514472.1">
    <molecule id="P58743-1"/>
    <property type="nucleotide sequence ID" value="XM_011516170.4"/>
</dbReference>
<dbReference type="PDB" id="7LGU">
    <property type="method" value="EM"/>
    <property type="resolution" value="2.30 A"/>
    <property type="chains" value="A/B=1-744"/>
</dbReference>
<dbReference type="PDB" id="7LGW">
    <property type="method" value="EM"/>
    <property type="resolution" value="2.70 A"/>
    <property type="chains" value="A/B=1-744"/>
</dbReference>
<dbReference type="PDB" id="7LH2">
    <property type="method" value="EM"/>
    <property type="resolution" value="3.43 A"/>
    <property type="chains" value="A/B=1-744"/>
</dbReference>
<dbReference type="PDB" id="7LH3">
    <property type="method" value="EM"/>
    <property type="resolution" value="4.30 A"/>
    <property type="chains" value="A/B=1-744"/>
</dbReference>
<dbReference type="PDBsum" id="7LGU"/>
<dbReference type="PDBsum" id="7LGW"/>
<dbReference type="PDBsum" id="7LH2"/>
<dbReference type="PDBsum" id="7LH3"/>
<dbReference type="EMDB" id="EMD-23329"/>
<dbReference type="EMDB" id="EMD-23331"/>
<dbReference type="EMDB" id="EMD-23334"/>
<dbReference type="EMDB" id="EMD-23335"/>
<dbReference type="SMR" id="P58743"/>
<dbReference type="BioGRID" id="131988">
    <property type="interactions" value="1"/>
</dbReference>
<dbReference type="FunCoup" id="P58743">
    <property type="interactions" value="82"/>
</dbReference>
<dbReference type="IntAct" id="P58743">
    <property type="interactions" value="1"/>
</dbReference>
<dbReference type="STRING" id="9606.ENSP00000304783"/>
<dbReference type="TCDB" id="2.A.53.2.19">
    <property type="family name" value="the sulfate permease (sulp) family"/>
</dbReference>
<dbReference type="GlyCosmos" id="P58743">
    <property type="glycosylation" value="2 sites, No reported glycans"/>
</dbReference>
<dbReference type="GlyGen" id="P58743">
    <property type="glycosylation" value="3 sites"/>
</dbReference>
<dbReference type="iPTMnet" id="P58743"/>
<dbReference type="PhosphoSitePlus" id="P58743"/>
<dbReference type="BioMuta" id="SLC26A5"/>
<dbReference type="DMDM" id="20139418"/>
<dbReference type="jPOST" id="P58743"/>
<dbReference type="MassIVE" id="P58743"/>
<dbReference type="PaxDb" id="9606-ENSP00000304783"/>
<dbReference type="Antibodypedia" id="31198">
    <property type="antibodies" value="132 antibodies from 26 providers"/>
</dbReference>
<dbReference type="DNASU" id="375611"/>
<dbReference type="Ensembl" id="ENST00000306312.8">
    <molecule id="P58743-1"/>
    <property type="protein sequence ID" value="ENSP00000304783.3"/>
    <property type="gene ID" value="ENSG00000170615.16"/>
</dbReference>
<dbReference type="Ensembl" id="ENST00000339444.10">
    <molecule id="P58743-2"/>
    <property type="protein sequence ID" value="ENSP00000342396.6"/>
    <property type="gene ID" value="ENSG00000170615.16"/>
</dbReference>
<dbReference type="Ensembl" id="ENST00000356767.8">
    <molecule id="P58743-4"/>
    <property type="protein sequence ID" value="ENSP00000349210.4"/>
    <property type="gene ID" value="ENSG00000170615.16"/>
</dbReference>
<dbReference type="Ensembl" id="ENST00000393723.2">
    <molecule id="P58743-6"/>
    <property type="protein sequence ID" value="ENSP00000377324.1"/>
    <property type="gene ID" value="ENSG00000170615.16"/>
</dbReference>
<dbReference type="Ensembl" id="ENST00000393730.5">
    <molecule id="P58743-5"/>
    <property type="protein sequence ID" value="ENSP00000377331.1"/>
    <property type="gene ID" value="ENSG00000170615.16"/>
</dbReference>
<dbReference type="Ensembl" id="ENST00000393735.6">
    <molecule id="P58743-3"/>
    <property type="protein sequence ID" value="ENSP00000377336.2"/>
    <property type="gene ID" value="ENSG00000170615.16"/>
</dbReference>
<dbReference type="Ensembl" id="ENST00000432958.6">
    <molecule id="P58743-5"/>
    <property type="protein sequence ID" value="ENSP00000389733.2"/>
    <property type="gene ID" value="ENSG00000170615.16"/>
</dbReference>
<dbReference type="GeneID" id="375611"/>
<dbReference type="KEGG" id="hsa:375611"/>
<dbReference type="MANE-Select" id="ENST00000306312.8">
    <property type="protein sequence ID" value="ENSP00000304783.3"/>
    <property type="RefSeq nucleotide sequence ID" value="NM_198999.3"/>
    <property type="RefSeq protein sequence ID" value="NP_945350.1"/>
</dbReference>
<dbReference type="UCSC" id="uc003vbt.3">
    <molecule id="P58743-1"/>
    <property type="organism name" value="human"/>
</dbReference>
<dbReference type="AGR" id="HGNC:9359"/>
<dbReference type="CTD" id="375611"/>
<dbReference type="DisGeNET" id="375611"/>
<dbReference type="GeneCards" id="SLC26A5"/>
<dbReference type="HGNC" id="HGNC:9359">
    <property type="gene designation" value="SLC26A5"/>
</dbReference>
<dbReference type="HPA" id="ENSG00000170615">
    <property type="expression patterns" value="Not detected"/>
</dbReference>
<dbReference type="MalaCards" id="SLC26A5"/>
<dbReference type="MIM" id="604943">
    <property type="type" value="gene"/>
</dbReference>
<dbReference type="MIM" id="613865">
    <property type="type" value="phenotype"/>
</dbReference>
<dbReference type="neXtProt" id="NX_P58743"/>
<dbReference type="OpenTargets" id="ENSG00000170615"/>
<dbReference type="Orphanet" id="90636">
    <property type="disease" value="Rare autosomal recessive non-syndromic sensorineural deafness type DFNB"/>
</dbReference>
<dbReference type="PharmGKB" id="PA33731"/>
<dbReference type="VEuPathDB" id="HostDB:ENSG00000170615"/>
<dbReference type="eggNOG" id="KOG0236">
    <property type="taxonomic scope" value="Eukaryota"/>
</dbReference>
<dbReference type="GeneTree" id="ENSGT01070000253775"/>
<dbReference type="HOGENOM" id="CLU_003182_9_4_1"/>
<dbReference type="InParanoid" id="P58743"/>
<dbReference type="OMA" id="YKDAQRV"/>
<dbReference type="OrthoDB" id="288203at2759"/>
<dbReference type="PAN-GO" id="P58743">
    <property type="GO annotations" value="6 GO annotations based on evolutionary models"/>
</dbReference>
<dbReference type="PhylomeDB" id="P58743"/>
<dbReference type="TreeFam" id="TF313784"/>
<dbReference type="PathwayCommons" id="P58743"/>
<dbReference type="Reactome" id="R-HSA-9662361">
    <property type="pathway name" value="Sensory processing of sound by outer hair cells of the cochlea"/>
</dbReference>
<dbReference type="SignaLink" id="P58743"/>
<dbReference type="BioGRID-ORCS" id="375611">
    <property type="hits" value="10 hits in 1151 CRISPR screens"/>
</dbReference>
<dbReference type="ChiTaRS" id="SLC26A5">
    <property type="organism name" value="human"/>
</dbReference>
<dbReference type="GeneWiki" id="Prestin"/>
<dbReference type="GenomeRNAi" id="375611"/>
<dbReference type="Pharos" id="P58743">
    <property type="development level" value="Tbio"/>
</dbReference>
<dbReference type="PRO" id="PR:P58743"/>
<dbReference type="Proteomes" id="UP000005640">
    <property type="component" value="Chromosome 7"/>
</dbReference>
<dbReference type="RNAct" id="P58743">
    <property type="molecule type" value="protein"/>
</dbReference>
<dbReference type="Bgee" id="ENSG00000170615">
    <property type="expression patterns" value="Expressed in male germ line stem cell (sensu Vertebrata) in testis and 59 other cell types or tissues"/>
</dbReference>
<dbReference type="ExpressionAtlas" id="P58743">
    <property type="expression patterns" value="baseline and differential"/>
</dbReference>
<dbReference type="GO" id="GO:0016323">
    <property type="term" value="C:basolateral plasma membrane"/>
    <property type="evidence" value="ECO:0000250"/>
    <property type="project" value="UniProtKB"/>
</dbReference>
<dbReference type="GO" id="GO:0016328">
    <property type="term" value="C:lateral plasma membrane"/>
    <property type="evidence" value="ECO:0000314"/>
    <property type="project" value="UniProtKB"/>
</dbReference>
<dbReference type="GO" id="GO:0120249">
    <property type="term" value="C:lateral wall of outer hair cell"/>
    <property type="evidence" value="ECO:0007669"/>
    <property type="project" value="Ensembl"/>
</dbReference>
<dbReference type="GO" id="GO:0005886">
    <property type="term" value="C:plasma membrane"/>
    <property type="evidence" value="ECO:0000318"/>
    <property type="project" value="GO_Central"/>
</dbReference>
<dbReference type="GO" id="GO:0015106">
    <property type="term" value="F:bicarbonate transmembrane transporter activity"/>
    <property type="evidence" value="ECO:0000318"/>
    <property type="project" value="GO_Central"/>
</dbReference>
<dbReference type="GO" id="GO:0015108">
    <property type="term" value="F:chloride transmembrane transporter activity"/>
    <property type="evidence" value="ECO:0000318"/>
    <property type="project" value="GO_Central"/>
</dbReference>
<dbReference type="GO" id="GO:0140900">
    <property type="term" value="F:chloride:bicarbonate antiporter activity"/>
    <property type="evidence" value="ECO:0000250"/>
    <property type="project" value="UniProtKB"/>
</dbReference>
<dbReference type="GO" id="GO:0019531">
    <property type="term" value="F:oxalate transmembrane transporter activity"/>
    <property type="evidence" value="ECO:0000318"/>
    <property type="project" value="GO_Central"/>
</dbReference>
<dbReference type="GO" id="GO:0042803">
    <property type="term" value="F:protein homodimerization activity"/>
    <property type="evidence" value="ECO:0000314"/>
    <property type="project" value="UniProtKB"/>
</dbReference>
<dbReference type="GO" id="GO:0008271">
    <property type="term" value="F:secondary active sulfate transmembrane transporter activity"/>
    <property type="evidence" value="ECO:0007669"/>
    <property type="project" value="InterPro"/>
</dbReference>
<dbReference type="GO" id="GO:0030507">
    <property type="term" value="F:spectrin binding"/>
    <property type="evidence" value="ECO:0007669"/>
    <property type="project" value="Ensembl"/>
</dbReference>
<dbReference type="GO" id="GO:0015116">
    <property type="term" value="F:sulfate transmembrane transporter activity"/>
    <property type="evidence" value="ECO:0000318"/>
    <property type="project" value="GO_Central"/>
</dbReference>
<dbReference type="GO" id="GO:0015701">
    <property type="term" value="P:bicarbonate transport"/>
    <property type="evidence" value="ECO:0000250"/>
    <property type="project" value="UniProtKB"/>
</dbReference>
<dbReference type="GO" id="GO:1902476">
    <property type="term" value="P:chloride transmembrane transport"/>
    <property type="evidence" value="ECO:0000318"/>
    <property type="project" value="GO_Central"/>
</dbReference>
<dbReference type="GO" id="GO:0006821">
    <property type="term" value="P:chloride transport"/>
    <property type="evidence" value="ECO:0000250"/>
    <property type="project" value="UniProtKB"/>
</dbReference>
<dbReference type="GO" id="GO:0090102">
    <property type="term" value="P:cochlea development"/>
    <property type="evidence" value="ECO:0007669"/>
    <property type="project" value="Ensembl"/>
</dbReference>
<dbReference type="GO" id="GO:0015755">
    <property type="term" value="P:fructose transmembrane transport"/>
    <property type="evidence" value="ECO:0007669"/>
    <property type="project" value="Ensembl"/>
</dbReference>
<dbReference type="GO" id="GO:0034766">
    <property type="term" value="P:negative regulation of monoatomic ion transmembrane transport"/>
    <property type="evidence" value="ECO:0007669"/>
    <property type="project" value="Ensembl"/>
</dbReference>
<dbReference type="GO" id="GO:2000147">
    <property type="term" value="P:positive regulation of cell motility"/>
    <property type="evidence" value="ECO:0007669"/>
    <property type="project" value="Ensembl"/>
</dbReference>
<dbReference type="GO" id="GO:0045793">
    <property type="term" value="P:positive regulation of cell size"/>
    <property type="evidence" value="ECO:0007669"/>
    <property type="project" value="Ensembl"/>
</dbReference>
<dbReference type="GO" id="GO:0008360">
    <property type="term" value="P:regulation of cell shape"/>
    <property type="evidence" value="ECO:0007669"/>
    <property type="project" value="UniProtKB-KW"/>
</dbReference>
<dbReference type="GO" id="GO:0042391">
    <property type="term" value="P:regulation of membrane potential"/>
    <property type="evidence" value="ECO:0007669"/>
    <property type="project" value="Ensembl"/>
</dbReference>
<dbReference type="GO" id="GO:0010996">
    <property type="term" value="P:response to auditory stimulus"/>
    <property type="evidence" value="ECO:0007669"/>
    <property type="project" value="Ensembl"/>
</dbReference>
<dbReference type="GO" id="GO:0002931">
    <property type="term" value="P:response to ischemia"/>
    <property type="evidence" value="ECO:0007669"/>
    <property type="project" value="Ensembl"/>
</dbReference>
<dbReference type="GO" id="GO:0035864">
    <property type="term" value="P:response to potassium ion"/>
    <property type="evidence" value="ECO:0007669"/>
    <property type="project" value="Ensembl"/>
</dbReference>
<dbReference type="GO" id="GO:0009751">
    <property type="term" value="P:response to salicylic acid"/>
    <property type="evidence" value="ECO:0007669"/>
    <property type="project" value="Ensembl"/>
</dbReference>
<dbReference type="GO" id="GO:1902074">
    <property type="term" value="P:response to salt"/>
    <property type="evidence" value="ECO:0007669"/>
    <property type="project" value="Ensembl"/>
</dbReference>
<dbReference type="GO" id="GO:0097066">
    <property type="term" value="P:response to thyroid hormone"/>
    <property type="evidence" value="ECO:0007669"/>
    <property type="project" value="Ensembl"/>
</dbReference>
<dbReference type="GO" id="GO:0009410">
    <property type="term" value="P:response to xenobiotic stimulus"/>
    <property type="evidence" value="ECO:0007669"/>
    <property type="project" value="Ensembl"/>
</dbReference>
<dbReference type="GO" id="GO:0007605">
    <property type="term" value="P:sensory perception of sound"/>
    <property type="evidence" value="ECO:0000315"/>
    <property type="project" value="UniProtKB"/>
</dbReference>
<dbReference type="GO" id="GO:1902358">
    <property type="term" value="P:sulfate transmembrane transport"/>
    <property type="evidence" value="ECO:0000318"/>
    <property type="project" value="GO_Central"/>
</dbReference>
<dbReference type="CDD" id="cd07042">
    <property type="entry name" value="STAS_SulP_like_sulfate_transporter"/>
    <property type="match status" value="1"/>
</dbReference>
<dbReference type="Gene3D" id="3.30.750.24">
    <property type="entry name" value="STAS domain"/>
    <property type="match status" value="1"/>
</dbReference>
<dbReference type="InterPro" id="IPR018045">
    <property type="entry name" value="S04_transporter_CS"/>
</dbReference>
<dbReference type="InterPro" id="IPR011547">
    <property type="entry name" value="SLC26A/SulP_dom"/>
</dbReference>
<dbReference type="InterPro" id="IPR001902">
    <property type="entry name" value="SLC26A/SulP_fam"/>
</dbReference>
<dbReference type="InterPro" id="IPR002645">
    <property type="entry name" value="STAS_dom"/>
</dbReference>
<dbReference type="InterPro" id="IPR036513">
    <property type="entry name" value="STAS_dom_sf"/>
</dbReference>
<dbReference type="NCBIfam" id="TIGR00815">
    <property type="entry name" value="sulP"/>
    <property type="match status" value="1"/>
</dbReference>
<dbReference type="PANTHER" id="PTHR11814">
    <property type="entry name" value="SULFATE TRANSPORTER"/>
    <property type="match status" value="1"/>
</dbReference>
<dbReference type="Pfam" id="PF01740">
    <property type="entry name" value="STAS"/>
    <property type="match status" value="1"/>
</dbReference>
<dbReference type="Pfam" id="PF00916">
    <property type="entry name" value="Sulfate_transp"/>
    <property type="match status" value="1"/>
</dbReference>
<dbReference type="SUPFAM" id="SSF52091">
    <property type="entry name" value="SpoIIaa-like"/>
    <property type="match status" value="1"/>
</dbReference>
<dbReference type="PROSITE" id="PS01130">
    <property type="entry name" value="SLC26A"/>
    <property type="match status" value="1"/>
</dbReference>
<dbReference type="PROSITE" id="PS50801">
    <property type="entry name" value="STAS"/>
    <property type="match status" value="1"/>
</dbReference>
<comment type="function">
    <text evidence="3 4 5 6 11">Voltage-sensitive motor protein that drives outer hair cell (OHC) electromotility (eM) and participates in sound amplification in the hearing organ (By similarity). Converts changes in the transmembrane electric potential into mechanical displacements resulting in the coupling of its expansion to movement of a charged voltage sensor across the lipid membrane (By similarity). The nature of the voltage sensor is not completely clear, and two models compete. In the first model, acts as an incomplete transporter where intracellular chloride anion acts as extrinsic voltage sensor that drives conformational change in the protein which is sufficient to produce a length change in the plane of the membrane and hence in the length of the OHC (By similarity). The second model in which multiple charged amino acid residues are distributed at the intracellular and extracellular membrane interfaces that form an intrinsic voltage sensor, whose movement produces the non-linear capacitance (NLC) (PubMed:34390643). However, the effective voltage sensor may be the result of a hybrid voltage sensor, assembled from intrinsic charge (charged residues) and extrinsic charge (bound anion) (By similarity). Notably, binding of anions to the anion-binding pocket partially neutralizes the intrinsic positive charge rather than to form an electrically negative sensor, therefore remaining charge may serve as voltage sensor that, after depolarization, moves from down (expanded state) to up (contracted) conformation, which is accompanied by an eccentric contraction of the intermembrane cross-sectional area of the protein as well as a major increase in the hydrophobic thickness of the protein having as consequences the plasma membrane thickening and the cell contraction after membrane depolarization (PubMed:34390643). The anion-binding pocket transits from the inward-open (Down) state, where it is exposed toward the intracellular solvent in the absence of anion, to the occluded (Up) state upon anion binding (PubMed:34390643). Salicylate competes for the anion-binding site and inhibits the voltage-sensor movement, and therefore inhibits the charge transfer and electromotility by displacing Cl(-) from the anion-binding site and by preventing the structural transitions to the contracted state (PubMed:34390643). In addition, can act as a weak Cl(-)/HCO3(-) antiporter across the cell membrane and so regulate the intracellular pH of the outer hair cells (OHCs), while firstly found as being unable to mediate electrogenic anion transport (By similarity). Moreover, supports a role in cardiac mechanical amplification serving as an elastic element to enhance the actomyosin- based sarcomere contraction system (By similarity).</text>
</comment>
<comment type="catalytic activity">
    <reaction evidence="5">
        <text>2 hydrogencarbonate(in) + chloride(out) = 2 hydrogencarbonate(out) + chloride(in)</text>
        <dbReference type="Rhea" id="RHEA:72207"/>
        <dbReference type="ChEBI" id="CHEBI:17544"/>
        <dbReference type="ChEBI" id="CHEBI:17996"/>
    </reaction>
</comment>
<comment type="subunit">
    <text evidence="2 5 11 12">Homodimer (PubMed:34390643). Interacts (via STAS domain) with CALM; this interaction is calcium-dependent and the STAS domain interacts with only one lobe of CALM which is an elongated conformation (By similarity). Interacts with MYH1 (PubMed:39482536).</text>
</comment>
<comment type="interaction">
    <interactant intactId="EBI-18029942">
        <id>P58743-6</id>
    </interactant>
    <interactant intactId="EBI-988826">
        <id>Q9Y385</id>
        <label>UBE2J1</label>
    </interactant>
    <organismsDiffer>false</organismsDiffer>
    <experiments>3</experiments>
</comment>
<comment type="subcellular location">
    <subcellularLocation>
        <location evidence="17">Lateral cell membrane</location>
        <topology evidence="11">Multi-pass membrane protein</topology>
    </subcellularLocation>
    <text evidence="1 6 11">Localized at the lateral cell membrane of outer hair cells (By similarity). Alters profoundly the shape of its surrounding lipid bilayer (PubMed:34390643).</text>
</comment>
<comment type="alternative products">
    <event type="alternative splicing"/>
    <isoform>
        <id>P58743-1</id>
        <name>1</name>
        <name>SLC26A5a</name>
        <sequence type="displayed"/>
    </isoform>
    <isoform>
        <id>P58743-2</id>
        <name>2</name>
        <name>SLC26A5b</name>
        <sequence type="described" ref="VSP_010194 VSP_010195"/>
    </isoform>
    <isoform>
        <id>P58743-3</id>
        <name>3</name>
        <name>SLC26A5c</name>
        <sequence type="described" ref="VSP_010192 VSP_010193"/>
    </isoform>
    <isoform>
        <id>P58743-4</id>
        <name>4</name>
        <name>SLC26A5d</name>
        <sequence type="described" ref="VSP_010190 VSP_010191"/>
    </isoform>
    <isoform>
        <id>P58743-5</id>
        <name>5</name>
        <sequence type="described" ref="VSP_043153"/>
    </isoform>
    <isoform>
        <id>P58743-6</id>
        <name>6</name>
        <sequence type="described" ref="VSP_043153 VSP_047640"/>
    </isoform>
</comment>
<comment type="domain">
    <text evidence="3 5 11">The STAS domain mediates dimerization, with both STAS domains latched onto each other in a domain-swapped manner (PubMed:34390643). The N-terminus domain is involved in dimerization such that each N-terminus domain embraces both STAS domains (PubMed:34390643). The STAS domain harbors a unique anion-binding site important for the fine regulation of the high-frequency electromotile properties (By similarity). The transmembrane domain consists of 14 transmembrane segments organized in a 7(+)7 inverted repeat architecture that can be divided into two main helix bundles, the ''core'' domain and the ''gate'' domain (PubMed:34390643). The transmembrane regions are domain-swapped with the STAS domain containing N- and C-terminal cytoplasmic domains (By similarity). The STAS domain mediates CALM binding CALM (By similarity).</text>
</comment>
<comment type="disease" evidence="10">
    <disease id="DI-02548">
        <name>Deafness, autosomal recessive, 61</name>
        <acronym>DFNB61</acronym>
        <description>A form of non-syndromic sensorineural hearing loss. Sensorineural deafness results from damage to the neural receptors of the inner ear, the nerve pathways to the brain, or the area of the brain that receives sound information.</description>
        <dbReference type="MIM" id="613865"/>
    </disease>
    <text>The disease is caused by variants affecting the gene represented in this entry.</text>
</comment>
<comment type="similarity">
    <text evidence="16">Belongs to the SLC26A/SulP transporter (TC 2.A.53) family.</text>
</comment>
<comment type="online information" name="Protein Spotlight">
    <link uri="https://www.proteinspotlight.org/back_issues/022"/>
    <text>Pump up the volume - Issue 22 of May 2002</text>
</comment>
<gene>
    <name evidence="18" type="primary">SLC26A5</name>
    <name type="synonym">PRES</name>
</gene>
<name>S26A5_HUMAN</name>
<protein>
    <recommendedName>
        <fullName evidence="13">Prestin</fullName>
    </recommendedName>
    <alternativeName>
        <fullName>Solute carrier family 26 member 5</fullName>
    </alternativeName>
</protein>
<proteinExistence type="evidence at protein level"/>
<evidence type="ECO:0000250" key="1"/>
<evidence type="ECO:0000250" key="2">
    <source>
        <dbReference type="UniProtKB" id="A0FKN5"/>
    </source>
</evidence>
<evidence type="ECO:0000250" key="3">
    <source>
        <dbReference type="UniProtKB" id="D7PC76"/>
    </source>
</evidence>
<evidence type="ECO:0000250" key="4">
    <source>
        <dbReference type="UniProtKB" id="Q99NH7"/>
    </source>
</evidence>
<evidence type="ECO:0000250" key="5">
    <source>
        <dbReference type="UniProtKB" id="Q9EPH0"/>
    </source>
</evidence>
<evidence type="ECO:0000250" key="6">
    <source>
        <dbReference type="UniProtKB" id="Q9JKQ2"/>
    </source>
</evidence>
<evidence type="ECO:0000255" key="7"/>
<evidence type="ECO:0000255" key="8">
    <source>
        <dbReference type="PROSITE-ProRule" id="PRU00198"/>
    </source>
</evidence>
<evidence type="ECO:0000256" key="9">
    <source>
        <dbReference type="SAM" id="MobiDB-lite"/>
    </source>
</evidence>
<evidence type="ECO:0000269" key="10">
    <source>
    </source>
</evidence>
<evidence type="ECO:0000269" key="11">
    <source>
    </source>
</evidence>
<evidence type="ECO:0000269" key="12">
    <source>
    </source>
</evidence>
<evidence type="ECO:0000303" key="13">
    <source>
    </source>
</evidence>
<evidence type="ECO:0000303" key="14">
    <source>
    </source>
</evidence>
<evidence type="ECO:0000303" key="15">
    <source ref="2"/>
</evidence>
<evidence type="ECO:0000305" key="16"/>
<evidence type="ECO:0000305" key="17">
    <source>
    </source>
</evidence>
<evidence type="ECO:0000312" key="18">
    <source>
        <dbReference type="HGNC" id="HGNC:9359"/>
    </source>
</evidence>
<evidence type="ECO:0007744" key="19">
    <source>
        <dbReference type="PDB" id="7LGU"/>
    </source>
</evidence>
<evidence type="ECO:0007744" key="20">
    <source>
        <dbReference type="PDB" id="7LGW"/>
    </source>
</evidence>
<evidence type="ECO:0007744" key="21">
    <source>
        <dbReference type="PDB" id="7LH2"/>
    </source>
</evidence>
<evidence type="ECO:0007744" key="22">
    <source>
        <dbReference type="PDB" id="7LH3"/>
    </source>
</evidence>
<evidence type="ECO:0007829" key="23">
    <source>
        <dbReference type="PDB" id="7LGU"/>
    </source>
</evidence>
<keyword id="KW-0002">3D-structure</keyword>
<keyword id="KW-0025">Alternative splicing</keyword>
<keyword id="KW-1003">Cell membrane</keyword>
<keyword id="KW-0133">Cell shape</keyword>
<keyword id="KW-0209">Deafness</keyword>
<keyword id="KW-0325">Glycoprotein</keyword>
<keyword id="KW-1009">Hearing</keyword>
<keyword id="KW-0472">Membrane</keyword>
<keyword id="KW-0505">Motor protein</keyword>
<keyword id="KW-1010">Non-syndromic deafness</keyword>
<keyword id="KW-1267">Proteomics identification</keyword>
<keyword id="KW-1185">Reference proteome</keyword>
<keyword id="KW-0812">Transmembrane</keyword>
<keyword id="KW-1133">Transmembrane helix</keyword>
<feature type="chain" id="PRO_0000080167" description="Prestin">
    <location>
        <begin position="1"/>
        <end position="744"/>
    </location>
</feature>
<feature type="topological domain" description="Cytoplasmic" evidence="16">
    <location>
        <begin position="1"/>
        <end position="75"/>
    </location>
</feature>
<feature type="transmembrane region" description="Helical; Name=1" evidence="11 19 20 21 22">
    <location>
        <begin position="76"/>
        <end position="105"/>
    </location>
</feature>
<feature type="topological domain" description="Extracellular" evidence="16">
    <location>
        <begin position="106"/>
        <end position="108"/>
    </location>
</feature>
<feature type="transmembrane region" description="Helical; Name=2" evidence="11 19 20 21 22">
    <location>
        <begin position="109"/>
        <end position="126"/>
    </location>
</feature>
<feature type="topological domain" description="Cytoplasmic" evidence="16">
    <location>
        <begin position="127"/>
        <end position="137"/>
    </location>
</feature>
<feature type="transmembrane region" description="Helical; Name=3" evidence="11 19 20 21 22">
    <location>
        <begin position="138"/>
        <end position="151"/>
    </location>
</feature>
<feature type="topological domain" description="Extracellular" evidence="16">
    <location>
        <begin position="152"/>
        <end position="168"/>
    </location>
</feature>
<feature type="transmembrane region" description="Helical; Name=4" evidence="11 19 20 21 22">
    <location>
        <begin position="169"/>
        <end position="196"/>
    </location>
</feature>
<feature type="topological domain" description="Cytoplasmic" evidence="16">
    <location>
        <begin position="197"/>
        <end position="206"/>
    </location>
</feature>
<feature type="transmembrane region" description="Helical; Name=5a" evidence="11 19 20 21 22">
    <location>
        <begin position="207"/>
        <end position="230"/>
    </location>
</feature>
<feature type="topological domain" description="Extracellular" evidence="16">
    <location>
        <begin position="231"/>
        <end position="241"/>
    </location>
</feature>
<feature type="intramembrane region" description="Helical; Name=5b" evidence="11 19 20 21 22">
    <location>
        <begin position="242"/>
        <end position="253"/>
    </location>
</feature>
<feature type="topological domain" description="Extracellular" evidence="16">
    <location>
        <begin position="254"/>
        <end position="258"/>
    </location>
</feature>
<feature type="transmembrane region" description="Helical; Name=6" evidence="11 19 20 21 22">
    <location>
        <begin position="259"/>
        <end position="282"/>
    </location>
</feature>
<feature type="topological domain" description="Cytoplasmic" evidence="16">
    <location>
        <begin position="283"/>
        <end position="291"/>
    </location>
</feature>
<feature type="transmembrane region" description="Helical; Name=7" evidence="11 19 20 21 22">
    <location>
        <begin position="292"/>
        <end position="307"/>
    </location>
</feature>
<feature type="topological domain" description="Extracellular" evidence="16">
    <location>
        <begin position="308"/>
        <end position="332"/>
    </location>
</feature>
<feature type="transmembrane region" description="Helical; Name=8" evidence="11 19 20 21 22">
    <location>
        <begin position="333"/>
        <end position="367"/>
    </location>
</feature>
<feature type="topological domain" description="Cytoplasmic" evidence="16">
    <location>
        <begin position="368"/>
        <end position="370"/>
    </location>
</feature>
<feature type="transmembrane region" description="Helical; Name=9" evidence="11 19 20 21 22">
    <location>
        <begin position="371"/>
        <end position="388"/>
    </location>
</feature>
<feature type="topological domain" description="Extracellular" evidence="16">
    <location>
        <begin position="389"/>
        <end position="396"/>
    </location>
</feature>
<feature type="transmembrane region" description="Helical; Name=10" evidence="11 19 20 21 22">
    <location>
        <begin position="397"/>
        <end position="406"/>
    </location>
</feature>
<feature type="topological domain" description="Cytoplasmic" evidence="16">
    <location>
        <begin position="407"/>
        <end position="410"/>
    </location>
</feature>
<feature type="transmembrane region" description="Helical; Name=11" evidence="11 19 20 21 22">
    <location>
        <begin position="411"/>
        <end position="432"/>
    </location>
</feature>
<feature type="topological domain" description="Extracellular" evidence="16">
    <location>
        <begin position="433"/>
        <end position="436"/>
    </location>
</feature>
<feature type="transmembrane region" description="Helical; Name=12" evidence="11 19 20 21 22">
    <location>
        <begin position="437"/>
        <end position="464"/>
    </location>
</feature>
<feature type="topological domain" description="Cytoplasmic" evidence="16">
    <location>
        <position position="465"/>
    </location>
</feature>
<feature type="transmembrane region" description="Helical; Name=13" evidence="11 19 20 21 22">
    <location>
        <begin position="466"/>
        <end position="481"/>
    </location>
</feature>
<feature type="topological domain" description="Extracellular" evidence="16">
    <location>
        <begin position="482"/>
        <end position="483"/>
    </location>
</feature>
<feature type="transmembrane region" description="Helical; Name=14" evidence="11 19 20 21 22">
    <location>
        <begin position="484"/>
        <end position="504"/>
    </location>
</feature>
<feature type="topological domain" description="Cytoplasmic" evidence="16">
    <location>
        <begin position="505"/>
        <end position="744"/>
    </location>
</feature>
<feature type="domain" description="STAS" evidence="8">
    <location>
        <begin position="525"/>
        <end position="713"/>
    </location>
</feature>
<feature type="region of interest" description="Extended region for STAS domain" evidence="5">
    <location>
        <begin position="505"/>
        <end position="718"/>
    </location>
</feature>
<feature type="region of interest" description="Disordered" evidence="9">
    <location>
        <begin position="718"/>
        <end position="744"/>
    </location>
</feature>
<feature type="short sequence motif" description="Involved in motor function" evidence="6">
    <location>
        <begin position="158"/>
        <end position="168"/>
    </location>
</feature>
<feature type="binding site" evidence="11 21">
    <location>
        <position position="398"/>
    </location>
    <ligand>
        <name>salicylate</name>
        <dbReference type="ChEBI" id="CHEBI:30762"/>
        <note>antagonist</note>
    </ligand>
</feature>
<feature type="site" description="Controls the electromotile activity" evidence="2 5">
    <location>
        <position position="398"/>
    </location>
</feature>
<feature type="site" description="Contributes to anion binding" evidence="5">
    <location>
        <position position="399"/>
    </location>
</feature>
<feature type="glycosylation site" description="N-linked (GlcNAc...) asparagine" evidence="7">
    <location>
        <position position="163"/>
    </location>
</feature>
<feature type="glycosylation site" description="N-linked (GlcNAc...) asparagine" evidence="7">
    <location>
        <position position="166"/>
    </location>
</feature>
<feature type="splice variant" id="VSP_010190" description="In isoform 4." evidence="13">
    <original>LLPPANPDTSL</original>
    <variation>FHTEMTRRWRP</variation>
    <location>
        <begin position="325"/>
        <end position="335"/>
    </location>
</feature>
<feature type="splice variant" id="VSP_010191" description="In isoform 4." evidence="13">
    <location>
        <begin position="336"/>
        <end position="744"/>
    </location>
</feature>
<feature type="splice variant" id="VSP_043153" description="In isoform 5 and isoform 6." evidence="14 15">
    <location>
        <begin position="438"/>
        <end position="469"/>
    </location>
</feature>
<feature type="splice variant" id="VSP_010192" description="In isoform 3." evidence="13">
    <original>PSYKVLGKLPE</original>
    <variation>FHTEMTRRWRP</variation>
    <location>
        <begin position="506"/>
        <end position="516"/>
    </location>
</feature>
<feature type="splice variant" id="VSP_010193" description="In isoform 3." evidence="13">
    <location>
        <begin position="517"/>
        <end position="744"/>
    </location>
</feature>
<feature type="splice variant" id="VSP_047640" description="In isoform 6." evidence="15">
    <original>A</original>
    <variation>ATQ</variation>
    <location>
        <position position="595"/>
    </location>
</feature>
<feature type="splice variant" id="VSP_010194" description="In isoform 2." evidence="13">
    <original>QVVN</original>
    <variation>FIQR</variation>
    <location>
        <begin position="682"/>
        <end position="685"/>
    </location>
</feature>
<feature type="splice variant" id="VSP_010195" description="In isoform 2." evidence="13">
    <location>
        <begin position="686"/>
        <end position="744"/>
    </location>
</feature>
<feature type="mutagenesis site" description="Decreases salicylate inhibition." evidence="11">
    <original>F</original>
    <variation>Y</variation>
    <location>
        <position position="101"/>
    </location>
</feature>
<feature type="strand" evidence="23">
    <location>
        <begin position="15"/>
        <end position="21"/>
    </location>
</feature>
<feature type="helix" evidence="23">
    <location>
        <begin position="25"/>
        <end position="30"/>
    </location>
</feature>
<feature type="helix" evidence="23">
    <location>
        <begin position="42"/>
        <end position="48"/>
    </location>
</feature>
<feature type="helix" evidence="23">
    <location>
        <begin position="54"/>
        <end position="64"/>
    </location>
</feature>
<feature type="helix" evidence="23">
    <location>
        <begin position="67"/>
        <end position="70"/>
    </location>
</feature>
<feature type="turn" evidence="23">
    <location>
        <begin position="71"/>
        <end position="73"/>
    </location>
</feature>
<feature type="helix" evidence="23">
    <location>
        <begin position="76"/>
        <end position="104"/>
    </location>
</feature>
<feature type="helix" evidence="23">
    <location>
        <begin position="109"/>
        <end position="115"/>
    </location>
</feature>
<feature type="helix" evidence="23">
    <location>
        <begin position="118"/>
        <end position="126"/>
    </location>
</feature>
<feature type="strand" evidence="23">
    <location>
        <begin position="133"/>
        <end position="135"/>
    </location>
</feature>
<feature type="helix" evidence="23">
    <location>
        <begin position="138"/>
        <end position="151"/>
    </location>
</feature>
<feature type="helix" evidence="23">
    <location>
        <begin position="169"/>
        <end position="195"/>
    </location>
</feature>
<feature type="helix" evidence="23">
    <location>
        <begin position="198"/>
        <end position="204"/>
    </location>
</feature>
<feature type="helix" evidence="23">
    <location>
        <begin position="207"/>
        <end position="224"/>
    </location>
</feature>
<feature type="helix" evidence="23">
    <location>
        <begin position="226"/>
        <end position="230"/>
    </location>
</feature>
<feature type="helix" evidence="23">
    <location>
        <begin position="242"/>
        <end position="252"/>
    </location>
</feature>
<feature type="helix" evidence="23">
    <location>
        <begin position="253"/>
        <end position="256"/>
    </location>
</feature>
<feature type="helix" evidence="23">
    <location>
        <begin position="259"/>
        <end position="281"/>
    </location>
</feature>
<feature type="turn" evidence="23">
    <location>
        <begin position="282"/>
        <end position="285"/>
    </location>
</feature>
<feature type="helix" evidence="23">
    <location>
        <begin position="292"/>
        <end position="307"/>
    </location>
</feature>
<feature type="helix" evidence="23">
    <location>
        <begin position="309"/>
        <end position="312"/>
    </location>
</feature>
<feature type="helix" evidence="23">
    <location>
        <begin position="333"/>
        <end position="335"/>
    </location>
</feature>
<feature type="helix" evidence="23">
    <location>
        <begin position="336"/>
        <end position="365"/>
    </location>
</feature>
<feature type="helix" evidence="23">
    <location>
        <begin position="371"/>
        <end position="387"/>
    </location>
</feature>
<feature type="strand" evidence="23">
    <location>
        <begin position="394"/>
        <end position="396"/>
    </location>
</feature>
<feature type="helix" evidence="23">
    <location>
        <begin position="397"/>
        <end position="405"/>
    </location>
</feature>
<feature type="helix" evidence="23">
    <location>
        <begin position="412"/>
        <end position="426"/>
    </location>
</feature>
<feature type="helix" evidence="23">
    <location>
        <begin position="429"/>
        <end position="432"/>
    </location>
</feature>
<feature type="helix" evidence="23">
    <location>
        <begin position="437"/>
        <end position="447"/>
    </location>
</feature>
<feature type="helix" evidence="23">
    <location>
        <begin position="449"/>
        <end position="453"/>
    </location>
</feature>
<feature type="helix" evidence="23">
    <location>
        <begin position="454"/>
        <end position="456"/>
    </location>
</feature>
<feature type="helix" evidence="23">
    <location>
        <begin position="457"/>
        <end position="464"/>
    </location>
</feature>
<feature type="helix" evidence="23">
    <location>
        <begin position="466"/>
        <end position="481"/>
    </location>
</feature>
<feature type="helix" evidence="23">
    <location>
        <begin position="486"/>
        <end position="504"/>
    </location>
</feature>
<feature type="strand" evidence="23">
    <location>
        <begin position="508"/>
        <end position="513"/>
    </location>
</feature>
<feature type="strand" evidence="23">
    <location>
        <begin position="520"/>
        <end position="522"/>
    </location>
</feature>
<feature type="turn" evidence="23">
    <location>
        <begin position="523"/>
        <end position="525"/>
    </location>
</feature>
<feature type="strand" evidence="23">
    <location>
        <begin position="526"/>
        <end position="528"/>
    </location>
</feature>
<feature type="strand" evidence="23">
    <location>
        <begin position="535"/>
        <end position="542"/>
    </location>
</feature>
<feature type="helix" evidence="23">
    <location>
        <begin position="546"/>
        <end position="559"/>
    </location>
</feature>
<feature type="helix" evidence="23">
    <location>
        <begin position="564"/>
        <end position="578"/>
    </location>
</feature>
<feature type="helix" evidence="23">
    <location>
        <begin position="627"/>
        <end position="630"/>
    </location>
</feature>
<feature type="strand" evidence="23">
    <location>
        <begin position="641"/>
        <end position="645"/>
    </location>
</feature>
<feature type="helix" evidence="23">
    <location>
        <begin position="654"/>
        <end position="669"/>
    </location>
</feature>
<feature type="strand" evidence="23">
    <location>
        <begin position="673"/>
        <end position="678"/>
    </location>
</feature>
<feature type="helix" evidence="23">
    <location>
        <begin position="681"/>
        <end position="689"/>
    </location>
</feature>
<feature type="turn" evidence="23">
    <location>
        <begin position="690"/>
        <end position="693"/>
    </location>
</feature>
<feature type="helix" evidence="23">
    <location>
        <begin position="696"/>
        <end position="701"/>
    </location>
</feature>
<feature type="strand" evidence="23">
    <location>
        <begin position="702"/>
        <end position="705"/>
    </location>
</feature>
<feature type="helix" evidence="23">
    <location>
        <begin position="706"/>
        <end position="724"/>
    </location>
</feature>
<reference key="1">
    <citation type="journal article" date="2003" name="Hum. Mol. Genet.">
        <title>Prestin, a cochlear motor protein, is defective in non-syndromic hearing loss.</title>
        <authorList>
            <person name="Liu X.Z."/>
            <person name="Ouyang X.M."/>
            <person name="Xia X.J."/>
            <person name="Zheng J."/>
            <person name="Pandya A."/>
            <person name="Li F."/>
            <person name="Du L.L."/>
            <person name="Welch K.O."/>
            <person name="Petit C."/>
            <person name="Smith R.J.H."/>
            <person name="Webb B.T."/>
            <person name="Yan D."/>
            <person name="Arnos K.S."/>
            <person name="Corey D."/>
            <person name="Dallos P."/>
            <person name="Nance W.E."/>
            <person name="Chen Z.-Y."/>
        </authorList>
    </citation>
    <scope>NUCLEOTIDE SEQUENCE [MRNA] (ISOFORMS 1; 2; 3 AND 4)</scope>
    <scope>INVOLVEMENT IN DFNB61</scope>
    <source>
        <tissue>Organ of Corti</tissue>
    </source>
</reference>
<reference key="2">
    <citation type="submission" date="2003-05" db="EMBL/GenBank/DDBJ databases">
        <title>Sequence of an alternatively spliced isoform of prestin (SLC26A5e).</title>
        <authorList>
            <person name="Mount D.B."/>
        </authorList>
    </citation>
    <scope>NUCLEOTIDE SEQUENCE [MRNA] (ISOFORM 6)</scope>
</reference>
<reference key="3">
    <citation type="journal article" date="2003" name="Nature">
        <title>The DNA sequence of human chromosome 7.</title>
        <authorList>
            <person name="Hillier L.W."/>
            <person name="Fulton R.S."/>
            <person name="Fulton L.A."/>
            <person name="Graves T.A."/>
            <person name="Pepin K.H."/>
            <person name="Wagner-McPherson C."/>
            <person name="Layman D."/>
            <person name="Maas J."/>
            <person name="Jaeger S."/>
            <person name="Walker R."/>
            <person name="Wylie K."/>
            <person name="Sekhon M."/>
            <person name="Becker M.C."/>
            <person name="O'Laughlin M.D."/>
            <person name="Schaller M.E."/>
            <person name="Fewell G.A."/>
            <person name="Delehaunty K.D."/>
            <person name="Miner T.L."/>
            <person name="Nash W.E."/>
            <person name="Cordes M."/>
            <person name="Du H."/>
            <person name="Sun H."/>
            <person name="Edwards J."/>
            <person name="Bradshaw-Cordum H."/>
            <person name="Ali J."/>
            <person name="Andrews S."/>
            <person name="Isak A."/>
            <person name="Vanbrunt A."/>
            <person name="Nguyen C."/>
            <person name="Du F."/>
            <person name="Lamar B."/>
            <person name="Courtney L."/>
            <person name="Kalicki J."/>
            <person name="Ozersky P."/>
            <person name="Bielicki L."/>
            <person name="Scott K."/>
            <person name="Holmes A."/>
            <person name="Harkins R."/>
            <person name="Harris A."/>
            <person name="Strong C.M."/>
            <person name="Hou S."/>
            <person name="Tomlinson C."/>
            <person name="Dauphin-Kohlberg S."/>
            <person name="Kozlowicz-Reilly A."/>
            <person name="Leonard S."/>
            <person name="Rohlfing T."/>
            <person name="Rock S.M."/>
            <person name="Tin-Wollam A.-M."/>
            <person name="Abbott A."/>
            <person name="Minx P."/>
            <person name="Maupin R."/>
            <person name="Strowmatt C."/>
            <person name="Latreille P."/>
            <person name="Miller N."/>
            <person name="Johnson D."/>
            <person name="Murray J."/>
            <person name="Woessner J.P."/>
            <person name="Wendl M.C."/>
            <person name="Yang S.-P."/>
            <person name="Schultz B.R."/>
            <person name="Wallis J.W."/>
            <person name="Spieth J."/>
            <person name="Bieri T.A."/>
            <person name="Nelson J.O."/>
            <person name="Berkowicz N."/>
            <person name="Wohldmann P.E."/>
            <person name="Cook L.L."/>
            <person name="Hickenbotham M.T."/>
            <person name="Eldred J."/>
            <person name="Williams D."/>
            <person name="Bedell J.A."/>
            <person name="Mardis E.R."/>
            <person name="Clifton S.W."/>
            <person name="Chissoe S.L."/>
            <person name="Marra M.A."/>
            <person name="Raymond C."/>
            <person name="Haugen E."/>
            <person name="Gillett W."/>
            <person name="Zhou Y."/>
            <person name="James R."/>
            <person name="Phelps K."/>
            <person name="Iadanoto S."/>
            <person name="Bubb K."/>
            <person name="Simms E."/>
            <person name="Levy R."/>
            <person name="Clendenning J."/>
            <person name="Kaul R."/>
            <person name="Kent W.J."/>
            <person name="Furey T.S."/>
            <person name="Baertsch R.A."/>
            <person name="Brent M.R."/>
            <person name="Keibler E."/>
            <person name="Flicek P."/>
            <person name="Bork P."/>
            <person name="Suyama M."/>
            <person name="Bailey J.A."/>
            <person name="Portnoy M.E."/>
            <person name="Torrents D."/>
            <person name="Chinwalla A.T."/>
            <person name="Gish W.R."/>
            <person name="Eddy S.R."/>
            <person name="McPherson J.D."/>
            <person name="Olson M.V."/>
            <person name="Eichler E.E."/>
            <person name="Green E.D."/>
            <person name="Waterston R.H."/>
            <person name="Wilson R.K."/>
        </authorList>
    </citation>
    <scope>NUCLEOTIDE SEQUENCE [LARGE SCALE GENOMIC DNA]</scope>
</reference>
<reference key="4">
    <citation type="journal article" date="2004" name="Genome Res.">
        <title>The status, quality, and expansion of the NIH full-length cDNA project: the Mammalian Gene Collection (MGC).</title>
        <authorList>
            <consortium name="The MGC Project Team"/>
        </authorList>
    </citation>
    <scope>NUCLEOTIDE SEQUENCE [LARGE SCALE MRNA] (ISOFORM 5)</scope>
</reference>
<reference key="5">
    <citation type="journal article" date="2024" name="Exp. Mol. Med.">
        <title>MYH1 deficiency disrupts outer hair cell electromotility, resulting in hearing loss.</title>
        <authorList>
            <person name="Jung J."/>
            <person name="Joo S.Y."/>
            <person name="Min H."/>
            <person name="Roh J.W."/>
            <person name="Kim K.A."/>
            <person name="Ma J.H."/>
            <person name="Rim J.H."/>
            <person name="Kim J.A."/>
            <person name="Kim S.J."/>
            <person name="Jang S.H."/>
            <person name="Koh Y.I."/>
            <person name="Kim H.Y."/>
            <person name="Lee H."/>
            <person name="Kim B.C."/>
            <person name="Gee H.Y."/>
            <person name="Bok J."/>
            <person name="Choi J.Y."/>
            <person name="Seong J.K."/>
        </authorList>
    </citation>
    <scope>INTERACTION WITH MYH1</scope>
</reference>
<reference evidence="19 20 21 22" key="6">
    <citation type="journal article" date="2021" name="Cell">
        <title>Molecular mechanism of prestin electromotive signal amplification.</title>
        <authorList>
            <person name="Ge J."/>
            <person name="Elferich J."/>
            <person name="Dehghani-Ghahnaviyeh S."/>
            <person name="Zhao Z."/>
            <person name="Meadows M."/>
            <person name="von Gersdorff H."/>
            <person name="Tajkhorshid E."/>
            <person name="Gouaux E."/>
        </authorList>
    </citation>
    <scope>STRUCTURE BY ELECTRON MICROSCOPY (2.30 ANGSTROMS) IN COMPLEX WITH CHOLESTEROL; CHLORIDE ION AND SALICYLATE</scope>
    <scope>SUBUNIT</scope>
    <scope>MUTAGENESIS OF PHE-101</scope>
    <scope>DOMAIN</scope>
    <scope>TOPOLOGY</scope>
    <scope>SUBCELLULAR LOCATION</scope>
</reference>
<accession>P58743</accession>
<accession>Q496J2</accession>
<accession>Q7Z7F3</accession>
<accession>Q86UF8</accession>
<accession>Q86UF9</accession>
<accession>Q86UG0</accession>